<name>QUEC_RICRO</name>
<evidence type="ECO:0000255" key="1">
    <source>
        <dbReference type="HAMAP-Rule" id="MF_01633"/>
    </source>
</evidence>
<comment type="function">
    <text evidence="1">Catalyzes the ATP-dependent conversion of 7-carboxy-7-deazaguanine (CDG) to 7-cyano-7-deazaguanine (preQ(0)).</text>
</comment>
<comment type="catalytic activity">
    <reaction evidence="1">
        <text>7-carboxy-7-deazaguanine + NH4(+) + ATP = 7-cyano-7-deazaguanine + ADP + phosphate + H2O + H(+)</text>
        <dbReference type="Rhea" id="RHEA:27982"/>
        <dbReference type="ChEBI" id="CHEBI:15377"/>
        <dbReference type="ChEBI" id="CHEBI:15378"/>
        <dbReference type="ChEBI" id="CHEBI:28938"/>
        <dbReference type="ChEBI" id="CHEBI:30616"/>
        <dbReference type="ChEBI" id="CHEBI:43474"/>
        <dbReference type="ChEBI" id="CHEBI:45075"/>
        <dbReference type="ChEBI" id="CHEBI:61036"/>
        <dbReference type="ChEBI" id="CHEBI:456216"/>
        <dbReference type="EC" id="6.3.4.20"/>
    </reaction>
</comment>
<comment type="cofactor">
    <cofactor evidence="1">
        <name>Zn(2+)</name>
        <dbReference type="ChEBI" id="CHEBI:29105"/>
    </cofactor>
    <text evidence="1">Binds 1 zinc ion per subunit.</text>
</comment>
<comment type="pathway">
    <text evidence="1">Purine metabolism; 7-cyano-7-deazaguanine biosynthesis.</text>
</comment>
<comment type="similarity">
    <text evidence="1">Belongs to the QueC family.</text>
</comment>
<feature type="chain" id="PRO_1000088160" description="7-cyano-7-deazaguanine synthase">
    <location>
        <begin position="1"/>
        <end position="228"/>
    </location>
</feature>
<feature type="binding site" evidence="1">
    <location>
        <begin position="9"/>
        <end position="19"/>
    </location>
    <ligand>
        <name>ATP</name>
        <dbReference type="ChEBI" id="CHEBI:30616"/>
    </ligand>
</feature>
<feature type="binding site" evidence="1">
    <location>
        <position position="193"/>
    </location>
    <ligand>
        <name>Zn(2+)</name>
        <dbReference type="ChEBI" id="CHEBI:29105"/>
    </ligand>
</feature>
<feature type="binding site" evidence="1">
    <location>
        <position position="203"/>
    </location>
    <ligand>
        <name>Zn(2+)</name>
        <dbReference type="ChEBI" id="CHEBI:29105"/>
    </ligand>
</feature>
<feature type="binding site" evidence="1">
    <location>
        <position position="206"/>
    </location>
    <ligand>
        <name>Zn(2+)</name>
        <dbReference type="ChEBI" id="CHEBI:29105"/>
    </ligand>
</feature>
<feature type="binding site" evidence="1">
    <location>
        <position position="209"/>
    </location>
    <ligand>
        <name>Zn(2+)</name>
        <dbReference type="ChEBI" id="CHEBI:29105"/>
    </ligand>
</feature>
<keyword id="KW-0067">ATP-binding</keyword>
<keyword id="KW-0436">Ligase</keyword>
<keyword id="KW-0479">Metal-binding</keyword>
<keyword id="KW-0547">Nucleotide-binding</keyword>
<keyword id="KW-0671">Queuosine biosynthesis</keyword>
<keyword id="KW-0862">Zinc</keyword>
<sequence length="228" mass="25515">MKKKAVILLSGGPDSTTVLEIVSKTDYEIYALSFNYHRRNSLEVQKIQGLIKDYNVKQHRVINIDLQSFIGSALTDDNIDVPKFKNTDQLPSDIPVTYVPARNTIFLSYALGVAEVIGARDIFIGVHTNDYTNYPDCRPEYIKSFEAMANLATRVGVNGEKITIHAPLINMTKEQIIKKGLELGVDYSKTISCYDPTEDGLSCGQCLSCIVRLDAFKKNNVQDPIQYV</sequence>
<gene>
    <name evidence="1" type="primary">queC</name>
    <name type="ordered locus">RrIowa_1274</name>
</gene>
<protein>
    <recommendedName>
        <fullName evidence="1">7-cyano-7-deazaguanine synthase</fullName>
        <ecNumber evidence="1">6.3.4.20</ecNumber>
    </recommendedName>
    <alternativeName>
        <fullName evidence="1">7-cyano-7-carbaguanine synthase</fullName>
    </alternativeName>
    <alternativeName>
        <fullName evidence="1">PreQ(0) synthase</fullName>
    </alternativeName>
    <alternativeName>
        <fullName evidence="1">Queuosine biosynthesis protein QueC</fullName>
    </alternativeName>
</protein>
<dbReference type="EC" id="6.3.4.20" evidence="1"/>
<dbReference type="EMBL" id="CP000766">
    <property type="protein sequence ID" value="ABY73025.1"/>
    <property type="molecule type" value="Genomic_DNA"/>
</dbReference>
<dbReference type="RefSeq" id="WP_012151205.1">
    <property type="nucleotide sequence ID" value="NC_010263.3"/>
</dbReference>
<dbReference type="SMR" id="B0BUW5"/>
<dbReference type="GeneID" id="79937720"/>
<dbReference type="KEGG" id="rrj:RrIowa_1274"/>
<dbReference type="eggNOG" id="COG0603">
    <property type="taxonomic scope" value="Bacteria"/>
</dbReference>
<dbReference type="HOGENOM" id="CLU_081854_1_1_5"/>
<dbReference type="UniPathway" id="UPA00391"/>
<dbReference type="Proteomes" id="UP000000796">
    <property type="component" value="Chromosome"/>
</dbReference>
<dbReference type="GO" id="GO:0005524">
    <property type="term" value="F:ATP binding"/>
    <property type="evidence" value="ECO:0007669"/>
    <property type="project" value="UniProtKB-UniRule"/>
</dbReference>
<dbReference type="GO" id="GO:0016879">
    <property type="term" value="F:ligase activity, forming carbon-nitrogen bonds"/>
    <property type="evidence" value="ECO:0007669"/>
    <property type="project" value="UniProtKB-UniRule"/>
</dbReference>
<dbReference type="GO" id="GO:0008270">
    <property type="term" value="F:zinc ion binding"/>
    <property type="evidence" value="ECO:0007669"/>
    <property type="project" value="UniProtKB-UniRule"/>
</dbReference>
<dbReference type="GO" id="GO:0008616">
    <property type="term" value="P:queuosine biosynthetic process"/>
    <property type="evidence" value="ECO:0007669"/>
    <property type="project" value="UniProtKB-UniRule"/>
</dbReference>
<dbReference type="CDD" id="cd01995">
    <property type="entry name" value="QueC-like"/>
    <property type="match status" value="1"/>
</dbReference>
<dbReference type="Gene3D" id="3.40.50.620">
    <property type="entry name" value="HUPs"/>
    <property type="match status" value="1"/>
</dbReference>
<dbReference type="HAMAP" id="MF_01633">
    <property type="entry name" value="QueC"/>
    <property type="match status" value="1"/>
</dbReference>
<dbReference type="InterPro" id="IPR018317">
    <property type="entry name" value="QueC"/>
</dbReference>
<dbReference type="InterPro" id="IPR014729">
    <property type="entry name" value="Rossmann-like_a/b/a_fold"/>
</dbReference>
<dbReference type="NCBIfam" id="TIGR00364">
    <property type="entry name" value="7-cyano-7-deazaguanine synthase QueC"/>
    <property type="match status" value="1"/>
</dbReference>
<dbReference type="PANTHER" id="PTHR42914">
    <property type="entry name" value="7-CYANO-7-DEAZAGUANINE SYNTHASE"/>
    <property type="match status" value="1"/>
</dbReference>
<dbReference type="PANTHER" id="PTHR42914:SF1">
    <property type="entry name" value="7-CYANO-7-DEAZAGUANINE SYNTHASE"/>
    <property type="match status" value="1"/>
</dbReference>
<dbReference type="Pfam" id="PF06508">
    <property type="entry name" value="QueC"/>
    <property type="match status" value="1"/>
</dbReference>
<dbReference type="PIRSF" id="PIRSF006293">
    <property type="entry name" value="ExsB"/>
    <property type="match status" value="1"/>
</dbReference>
<dbReference type="SUPFAM" id="SSF52402">
    <property type="entry name" value="Adenine nucleotide alpha hydrolases-like"/>
    <property type="match status" value="1"/>
</dbReference>
<proteinExistence type="inferred from homology"/>
<accession>B0BUW5</accession>
<organism>
    <name type="scientific">Rickettsia rickettsii (strain Iowa)</name>
    <dbReference type="NCBI Taxonomy" id="452659"/>
    <lineage>
        <taxon>Bacteria</taxon>
        <taxon>Pseudomonadati</taxon>
        <taxon>Pseudomonadota</taxon>
        <taxon>Alphaproteobacteria</taxon>
        <taxon>Rickettsiales</taxon>
        <taxon>Rickettsiaceae</taxon>
        <taxon>Rickettsieae</taxon>
        <taxon>Rickettsia</taxon>
        <taxon>spotted fever group</taxon>
    </lineage>
</organism>
<reference key="1">
    <citation type="journal article" date="2008" name="Infect. Immun.">
        <title>Genomic comparison of virulent Rickettsia rickettsii Sheila Smith and avirulent Rickettsia rickettsii Iowa.</title>
        <authorList>
            <person name="Ellison D.W."/>
            <person name="Clark T.R."/>
            <person name="Sturdevant D.E."/>
            <person name="Virtaneva K."/>
            <person name="Porcella S.F."/>
            <person name="Hackstadt T."/>
        </authorList>
    </citation>
    <scope>NUCLEOTIDE SEQUENCE [LARGE SCALE GENOMIC DNA]</scope>
    <source>
        <strain>Iowa</strain>
    </source>
</reference>